<comment type="function">
    <text evidence="2">Plays a role in the regulation of cytoplasmic stress granules (SGs) turnover. SGs are dynamic and transient cytoplasmic ribonucleoprotein assemblies important for cellular protein homeostasis when protein production is suspended after acute exogenous stress (PubMed:29804830). Associates with SGs and is involved in the efficient and specific arsenite-induced clearance process of SGs through the recruitment of the ubiquitin-selective ATPase VCP and the 26S proteasome (PubMed:29804830). This process requires both complexes for efficient degradation of damaged ubiquitinated SG proteins during recovery from arsenite stress, and hence avoiding aberrant cytoplasmic SGs degradation via autophagy (PubMed:29804830).</text>
</comment>
<comment type="subunit">
    <text evidence="2">Associates with the 26S proteasome; this association occurs upon exposure to arsenite and is reduced in the presence of ATP (PubMed:29804830). Interacts (via AN1-type 1 and 2 zinc fingers) with PSMD1; this interaction is increased upon arsenite treatment and occurs in an ATP-independent manner (PubMed:29804830). Interacts with PSMC4 (PubMed:29804830). Interacts with PSMA1 (PubMed:29804830). Interacts (via its ubiquitin-like region) with VCP; this interaction occurs in an arsenite-dependent manner and is necessary for the recruitment of the ubiquitin-selective ATPase VCP to stress granules (SGs) (PubMed:29804830).</text>
</comment>
<comment type="subcellular location">
    <subcellularLocation>
        <location evidence="2">Cytoplasm</location>
        <location evidence="2">Stress granule</location>
    </subcellularLocation>
    <text evidence="2">Colocalizes with TIA1, G3BP1, VCP and 26S proteasome in cytoplasmic stress granules (SGs) in response to arsenite-induced stress treatment in a VCP-independent manner (PubMed:29804830). Not localized in SGs in response to other heat- oxidative- or osmotic-induced stress treatments. Colocalizes with VCP in cytoplasmic speckles (PubMed:29804830).</text>
</comment>
<comment type="alternative products">
    <event type="alternative splicing"/>
    <isoform>
        <id>Q8TCF1-1</id>
        <name>1</name>
        <sequence type="displayed"/>
    </isoform>
    <isoform>
        <id>Q8TCF1-2</id>
        <name>2</name>
        <sequence type="described" ref="VSP_014988"/>
    </isoform>
    <isoform>
        <id>Q8TCF1-3</id>
        <name>3</name>
        <sequence type="described" ref="VSP_046404"/>
    </isoform>
    <isoform>
        <id>Q8TCF1-4</id>
        <name>4</name>
        <sequence type="described" ref="VSP_054080 VSP_054081"/>
    </isoform>
</comment>
<comment type="domain">
    <text evidence="2">The ubiquitin-like region is necessary for its localization to stress granules (SGs) in a VCP-independent manner (PubMed:29804830). The AN1-type 1 and 2 zinc finger domains are necessary for the recruitment of the 26S proteasome to SGs (PubMed:29804830). Both the AN1-type 1 and 2 zinc finger domains and the ubiquitin-like region are necessary for efficient SGs clearance upon specific arsenite-induced responses (PubMed:29804830).</text>
</comment>
<sequence>MAELDIGQHCQVEHCRQRDFLPFVCDDCSGIFCLEHRSRESHGCPEVTVINERLKTDQHTSYPCSFKDCAERELVAVICPYCEKNFCLRHRHQSDHECEKLEIPKPRMAATQKLVKDIIDSKTGETASKRWKGAKNSETAAKVALMKLKMHADGDKSLPQTERIYFQVFLPKGSKEKSKPMFFCHRWSIGKAIDFAASLARLKNDNNKFTAKKLRLCHITSGEALPLDHTLETWIAKEDCPLYNGGNIILEYLNDEEQFCKNVESYLE</sequence>
<name>ZFAN1_HUMAN</name>
<evidence type="ECO:0000255" key="1">
    <source>
        <dbReference type="PROSITE-ProRule" id="PRU00449"/>
    </source>
</evidence>
<evidence type="ECO:0000269" key="2">
    <source>
    </source>
</evidence>
<evidence type="ECO:0000269" key="3">
    <source>
    </source>
</evidence>
<evidence type="ECO:0000303" key="4">
    <source>
    </source>
</evidence>
<evidence type="ECO:0000303" key="5">
    <source>
    </source>
</evidence>
<evidence type="ECO:0000303" key="6">
    <source ref="3"/>
</evidence>
<evidence type="ECO:0000305" key="7"/>
<evidence type="ECO:0000312" key="8">
    <source>
        <dbReference type="HGNC" id="HGNC:25858"/>
    </source>
</evidence>
<evidence type="ECO:0007829" key="9">
    <source>
        <dbReference type="PDB" id="7Y39"/>
    </source>
</evidence>
<evidence type="ECO:0007829" key="10">
    <source>
        <dbReference type="PDB" id="7Y7L"/>
    </source>
</evidence>
<evidence type="ECO:0007829" key="11">
    <source>
        <dbReference type="PDB" id="7YAB"/>
    </source>
</evidence>
<evidence type="ECO:0007829" key="12">
    <source>
        <dbReference type="PDB" id="8HW9"/>
    </source>
</evidence>
<evidence type="ECO:0007829" key="13">
    <source>
        <dbReference type="PDB" id="8XE8"/>
    </source>
</evidence>
<feature type="initiator methionine" description="Removed" evidence="3">
    <location>
        <position position="1"/>
    </location>
</feature>
<feature type="chain" id="PRO_0000066580" description="AN1-type zinc finger protein 1">
    <location>
        <begin position="2"/>
        <end position="268"/>
    </location>
</feature>
<feature type="zinc finger region" description="AN1-type 1" evidence="1">
    <location>
        <begin position="4"/>
        <end position="52"/>
    </location>
</feature>
<feature type="zinc finger region" description="AN1-type 2" evidence="1">
    <location>
        <begin position="58"/>
        <end position="106"/>
    </location>
</feature>
<feature type="region of interest" description="ubiquitin-like" evidence="5">
    <location>
        <begin position="160"/>
        <end position="260"/>
    </location>
</feature>
<feature type="binding site" evidence="1">
    <location>
        <position position="10"/>
    </location>
    <ligand>
        <name>Zn(2+)</name>
        <dbReference type="ChEBI" id="CHEBI:29105"/>
        <label>1</label>
    </ligand>
</feature>
<feature type="binding site" evidence="1">
    <location>
        <position position="15"/>
    </location>
    <ligand>
        <name>Zn(2+)</name>
        <dbReference type="ChEBI" id="CHEBI:29105"/>
        <label>1</label>
    </ligand>
</feature>
<feature type="binding site" evidence="1">
    <location>
        <position position="25"/>
    </location>
    <ligand>
        <name>Zn(2+)</name>
        <dbReference type="ChEBI" id="CHEBI:29105"/>
        <label>2</label>
    </ligand>
</feature>
<feature type="binding site" evidence="1">
    <location>
        <position position="28"/>
    </location>
    <ligand>
        <name>Zn(2+)</name>
        <dbReference type="ChEBI" id="CHEBI:29105"/>
        <label>2</label>
    </ligand>
</feature>
<feature type="binding site" evidence="1">
    <location>
        <position position="33"/>
    </location>
    <ligand>
        <name>Zn(2+)</name>
        <dbReference type="ChEBI" id="CHEBI:29105"/>
        <label>1</label>
    </ligand>
</feature>
<feature type="binding site" evidence="1">
    <location>
        <position position="36"/>
    </location>
    <ligand>
        <name>Zn(2+)</name>
        <dbReference type="ChEBI" id="CHEBI:29105"/>
        <label>1</label>
    </ligand>
</feature>
<feature type="binding site" evidence="1">
    <location>
        <position position="42"/>
    </location>
    <ligand>
        <name>Zn(2+)</name>
        <dbReference type="ChEBI" id="CHEBI:29105"/>
        <label>2</label>
    </ligand>
</feature>
<feature type="binding site" evidence="1">
    <location>
        <position position="44"/>
    </location>
    <ligand>
        <name>Zn(2+)</name>
        <dbReference type="ChEBI" id="CHEBI:29105"/>
        <label>2</label>
    </ligand>
</feature>
<feature type="binding site" evidence="1">
    <location>
        <position position="64"/>
    </location>
    <ligand>
        <name>Zn(2+)</name>
        <dbReference type="ChEBI" id="CHEBI:29105"/>
        <label>3</label>
    </ligand>
</feature>
<feature type="binding site" evidence="1">
    <location>
        <position position="69"/>
    </location>
    <ligand>
        <name>Zn(2+)</name>
        <dbReference type="ChEBI" id="CHEBI:29105"/>
        <label>3</label>
    </ligand>
</feature>
<feature type="binding site" evidence="1">
    <location>
        <position position="79"/>
    </location>
    <ligand>
        <name>Zn(2+)</name>
        <dbReference type="ChEBI" id="CHEBI:29105"/>
        <label>4</label>
    </ligand>
</feature>
<feature type="binding site" evidence="1">
    <location>
        <position position="82"/>
    </location>
    <ligand>
        <name>Zn(2+)</name>
        <dbReference type="ChEBI" id="CHEBI:29105"/>
        <label>4</label>
    </ligand>
</feature>
<feature type="binding site" evidence="1">
    <location>
        <position position="87"/>
    </location>
    <ligand>
        <name>Zn(2+)</name>
        <dbReference type="ChEBI" id="CHEBI:29105"/>
        <label>3</label>
    </ligand>
</feature>
<feature type="binding site" evidence="1">
    <location>
        <position position="90"/>
    </location>
    <ligand>
        <name>Zn(2+)</name>
        <dbReference type="ChEBI" id="CHEBI:29105"/>
        <label>3</label>
    </ligand>
</feature>
<feature type="binding site" evidence="1">
    <location>
        <position position="96"/>
    </location>
    <ligand>
        <name>Zn(2+)</name>
        <dbReference type="ChEBI" id="CHEBI:29105"/>
        <label>4</label>
    </ligand>
</feature>
<feature type="binding site" evidence="1">
    <location>
        <position position="98"/>
    </location>
    <ligand>
        <name>Zn(2+)</name>
        <dbReference type="ChEBI" id="CHEBI:29105"/>
        <label>4</label>
    </ligand>
</feature>
<feature type="modified residue" description="N-acetylalanine" evidence="3">
    <location>
        <position position="2"/>
    </location>
</feature>
<feature type="splice variant" id="VSP_014988" description="In isoform 2." evidence="4">
    <location>
        <begin position="1"/>
        <end position="107"/>
    </location>
</feature>
<feature type="splice variant" id="VSP_046404" description="In isoform 3." evidence="6">
    <location>
        <begin position="160"/>
        <end position="166"/>
    </location>
</feature>
<feature type="splice variant" id="VSP_054080" description="In isoform 4." evidence="7">
    <original>KLRLCHITSGEALPL</original>
    <variation>VTSHYNNISILIKVL</variation>
    <location>
        <begin position="213"/>
        <end position="227"/>
    </location>
</feature>
<feature type="splice variant" id="VSP_054081" description="In isoform 4." evidence="7">
    <location>
        <begin position="228"/>
        <end position="268"/>
    </location>
</feature>
<feature type="sequence conflict" description="In Ref. 1; BAB14813." evidence="7" ref="1">
    <original>F</original>
    <variation>L</variation>
    <location>
        <position position="182"/>
    </location>
</feature>
<feature type="sequence conflict" description="In Ref. 6; CAH56344." evidence="7" ref="6">
    <original>A</original>
    <variation>T</variation>
    <location>
        <position position="192"/>
    </location>
</feature>
<feature type="sequence conflict" description="In Ref. 2; CAG33604." evidence="7" ref="2">
    <original>E</original>
    <variation>D</variation>
    <location>
        <position position="268"/>
    </location>
</feature>
<feature type="strand" evidence="11">
    <location>
        <begin position="30"/>
        <end position="32"/>
    </location>
</feature>
<feature type="helix" evidence="11">
    <location>
        <begin position="34"/>
        <end position="39"/>
    </location>
</feature>
<feature type="strand" evidence="10">
    <location>
        <begin position="80"/>
        <end position="82"/>
    </location>
</feature>
<feature type="helix" evidence="10">
    <location>
        <begin position="88"/>
        <end position="91"/>
    </location>
</feature>
<feature type="helix" evidence="10">
    <location>
        <begin position="93"/>
        <end position="96"/>
    </location>
</feature>
<feature type="helix" evidence="9">
    <location>
        <begin position="138"/>
        <end position="151"/>
    </location>
</feature>
<feature type="strand" evidence="12">
    <location>
        <begin position="152"/>
        <end position="154"/>
    </location>
</feature>
<feature type="strand" evidence="13">
    <location>
        <begin position="156"/>
        <end position="158"/>
    </location>
</feature>
<feature type="helix" evidence="9">
    <location>
        <begin position="160"/>
        <end position="162"/>
    </location>
</feature>
<feature type="strand" evidence="9">
    <location>
        <begin position="163"/>
        <end position="169"/>
    </location>
</feature>
<feature type="strand" evidence="9">
    <location>
        <begin position="178"/>
        <end position="184"/>
    </location>
</feature>
<feature type="helix" evidence="9">
    <location>
        <begin position="189"/>
        <end position="199"/>
    </location>
</feature>
<feature type="turn" evidence="9">
    <location>
        <begin position="207"/>
        <end position="209"/>
    </location>
</feature>
<feature type="strand" evidence="9">
    <location>
        <begin position="213"/>
        <end position="217"/>
    </location>
</feature>
<feature type="turn" evidence="9">
    <location>
        <begin position="219"/>
        <end position="221"/>
    </location>
</feature>
<feature type="helix" evidence="9">
    <location>
        <begin position="231"/>
        <end position="234"/>
    </location>
</feature>
<feature type="strand" evidence="9">
    <location>
        <begin position="238"/>
        <end position="240"/>
    </location>
</feature>
<feature type="strand" evidence="9">
    <location>
        <begin position="246"/>
        <end position="253"/>
    </location>
</feature>
<feature type="helix" evidence="9">
    <location>
        <begin position="263"/>
        <end position="267"/>
    </location>
</feature>
<feature type="initiator methionine" description="Removed" evidence="3">
    <location sequence="Q8TCF1-2">
        <position position="1"/>
    </location>
</feature>
<feature type="modified residue" description="N-acetylalanine" evidence="3">
    <location sequence="Q8TCF1-2">
        <position position="2"/>
    </location>
</feature>
<proteinExistence type="evidence at protein level"/>
<keyword id="KW-0002">3D-structure</keyword>
<keyword id="KW-0007">Acetylation</keyword>
<keyword id="KW-0025">Alternative splicing</keyword>
<keyword id="KW-0963">Cytoplasm</keyword>
<keyword id="KW-0479">Metal-binding</keyword>
<keyword id="KW-1267">Proteomics identification</keyword>
<keyword id="KW-1185">Reference proteome</keyword>
<keyword id="KW-0677">Repeat</keyword>
<keyword id="KW-0862">Zinc</keyword>
<keyword id="KW-0863">Zinc-finger</keyword>
<protein>
    <recommendedName>
        <fullName evidence="7">AN1-type zinc finger protein 1</fullName>
    </recommendedName>
    <alternativeName>
        <fullName evidence="7">Zinc finger AN1-type-containing protein 1</fullName>
    </alternativeName>
</protein>
<accession>Q8TCF1</accession>
<accession>E5RIG0</accession>
<accession>E5RJ99</accession>
<accession>Q658R7</accession>
<accession>Q6IA32</accession>
<accession>Q6PGQ6</accession>
<accession>Q9H810</accession>
<organism>
    <name type="scientific">Homo sapiens</name>
    <name type="common">Human</name>
    <dbReference type="NCBI Taxonomy" id="9606"/>
    <lineage>
        <taxon>Eukaryota</taxon>
        <taxon>Metazoa</taxon>
        <taxon>Chordata</taxon>
        <taxon>Craniata</taxon>
        <taxon>Vertebrata</taxon>
        <taxon>Euteleostomi</taxon>
        <taxon>Mammalia</taxon>
        <taxon>Eutheria</taxon>
        <taxon>Euarchontoglires</taxon>
        <taxon>Primates</taxon>
        <taxon>Haplorrhini</taxon>
        <taxon>Catarrhini</taxon>
        <taxon>Hominidae</taxon>
        <taxon>Homo</taxon>
    </lineage>
</organism>
<reference key="1">
    <citation type="journal article" date="2004" name="Nat. Genet.">
        <title>Complete sequencing and characterization of 21,243 full-length human cDNAs.</title>
        <authorList>
            <person name="Ota T."/>
            <person name="Suzuki Y."/>
            <person name="Nishikawa T."/>
            <person name="Otsuki T."/>
            <person name="Sugiyama T."/>
            <person name="Irie R."/>
            <person name="Wakamatsu A."/>
            <person name="Hayashi K."/>
            <person name="Sato H."/>
            <person name="Nagai K."/>
            <person name="Kimura K."/>
            <person name="Makita H."/>
            <person name="Sekine M."/>
            <person name="Obayashi M."/>
            <person name="Nishi T."/>
            <person name="Shibahara T."/>
            <person name="Tanaka T."/>
            <person name="Ishii S."/>
            <person name="Yamamoto J."/>
            <person name="Saito K."/>
            <person name="Kawai Y."/>
            <person name="Isono Y."/>
            <person name="Nakamura Y."/>
            <person name="Nagahari K."/>
            <person name="Murakami K."/>
            <person name="Yasuda T."/>
            <person name="Iwayanagi T."/>
            <person name="Wagatsuma M."/>
            <person name="Shiratori A."/>
            <person name="Sudo H."/>
            <person name="Hosoiri T."/>
            <person name="Kaku Y."/>
            <person name="Kodaira H."/>
            <person name="Kondo H."/>
            <person name="Sugawara M."/>
            <person name="Takahashi M."/>
            <person name="Kanda K."/>
            <person name="Yokoi T."/>
            <person name="Furuya T."/>
            <person name="Kikkawa E."/>
            <person name="Omura Y."/>
            <person name="Abe K."/>
            <person name="Kamihara K."/>
            <person name="Katsuta N."/>
            <person name="Sato K."/>
            <person name="Tanikawa M."/>
            <person name="Yamazaki M."/>
            <person name="Ninomiya K."/>
            <person name="Ishibashi T."/>
            <person name="Yamashita H."/>
            <person name="Murakawa K."/>
            <person name="Fujimori K."/>
            <person name="Tanai H."/>
            <person name="Kimata M."/>
            <person name="Watanabe M."/>
            <person name="Hiraoka S."/>
            <person name="Chiba Y."/>
            <person name="Ishida S."/>
            <person name="Ono Y."/>
            <person name="Takiguchi S."/>
            <person name="Watanabe S."/>
            <person name="Yosida M."/>
            <person name="Hotuta T."/>
            <person name="Kusano J."/>
            <person name="Kanehori K."/>
            <person name="Takahashi-Fujii A."/>
            <person name="Hara H."/>
            <person name="Tanase T.-O."/>
            <person name="Nomura Y."/>
            <person name="Togiya S."/>
            <person name="Komai F."/>
            <person name="Hara R."/>
            <person name="Takeuchi K."/>
            <person name="Arita M."/>
            <person name="Imose N."/>
            <person name="Musashino K."/>
            <person name="Yuuki H."/>
            <person name="Oshima A."/>
            <person name="Sasaki N."/>
            <person name="Aotsuka S."/>
            <person name="Yoshikawa Y."/>
            <person name="Matsunawa H."/>
            <person name="Ichihara T."/>
            <person name="Shiohata N."/>
            <person name="Sano S."/>
            <person name="Moriya S."/>
            <person name="Momiyama H."/>
            <person name="Satoh N."/>
            <person name="Takami S."/>
            <person name="Terashima Y."/>
            <person name="Suzuki O."/>
            <person name="Nakagawa S."/>
            <person name="Senoh A."/>
            <person name="Mizoguchi H."/>
            <person name="Goto Y."/>
            <person name="Shimizu F."/>
            <person name="Wakebe H."/>
            <person name="Hishigaki H."/>
            <person name="Watanabe T."/>
            <person name="Sugiyama A."/>
            <person name="Takemoto M."/>
            <person name="Kawakami B."/>
            <person name="Yamazaki M."/>
            <person name="Watanabe K."/>
            <person name="Kumagai A."/>
            <person name="Itakura S."/>
            <person name="Fukuzumi Y."/>
            <person name="Fujimori Y."/>
            <person name="Komiyama M."/>
            <person name="Tashiro H."/>
            <person name="Tanigami A."/>
            <person name="Fujiwara T."/>
            <person name="Ono T."/>
            <person name="Yamada K."/>
            <person name="Fujii Y."/>
            <person name="Ozaki K."/>
            <person name="Hirao M."/>
            <person name="Ohmori Y."/>
            <person name="Kawabata A."/>
            <person name="Hikiji T."/>
            <person name="Kobatake N."/>
            <person name="Inagaki H."/>
            <person name="Ikema Y."/>
            <person name="Okamoto S."/>
            <person name="Okitani R."/>
            <person name="Kawakami T."/>
            <person name="Noguchi S."/>
            <person name="Itoh T."/>
            <person name="Shigeta K."/>
            <person name="Senba T."/>
            <person name="Matsumura K."/>
            <person name="Nakajima Y."/>
            <person name="Mizuno T."/>
            <person name="Morinaga M."/>
            <person name="Sasaki M."/>
            <person name="Togashi T."/>
            <person name="Oyama M."/>
            <person name="Hata H."/>
            <person name="Watanabe M."/>
            <person name="Komatsu T."/>
            <person name="Mizushima-Sugano J."/>
            <person name="Satoh T."/>
            <person name="Shirai Y."/>
            <person name="Takahashi Y."/>
            <person name="Nakagawa K."/>
            <person name="Okumura K."/>
            <person name="Nagase T."/>
            <person name="Nomura N."/>
            <person name="Kikuchi H."/>
            <person name="Masuho Y."/>
            <person name="Yamashita R."/>
            <person name="Nakai K."/>
            <person name="Yada T."/>
            <person name="Nakamura Y."/>
            <person name="Ohara O."/>
            <person name="Isogai T."/>
            <person name="Sugano S."/>
        </authorList>
    </citation>
    <scope>NUCLEOTIDE SEQUENCE [LARGE SCALE MRNA] (ISOFORM 1)</scope>
</reference>
<reference key="2">
    <citation type="submission" date="2004-06" db="EMBL/GenBank/DDBJ databases">
        <title>Cloning of human full open reading frames in Gateway(TM) system entry vector (pDONR201).</title>
        <authorList>
            <person name="Ebert L."/>
            <person name="Schick M."/>
            <person name="Neubert P."/>
            <person name="Schatten R."/>
            <person name="Henze S."/>
            <person name="Korn B."/>
        </authorList>
    </citation>
    <scope>NUCLEOTIDE SEQUENCE [LARGE SCALE MRNA] (ISOFORM 1)</scope>
</reference>
<reference key="3">
    <citation type="submission" date="2006-07" db="EMBL/GenBank/DDBJ databases">
        <authorList>
            <person name="Suzuki Y."/>
            <person name="Sugano S."/>
            <person name="Totoki Y."/>
            <person name="Toyoda A."/>
            <person name="Takeda T."/>
            <person name="Sakaki Y."/>
            <person name="Tanaka A."/>
            <person name="Yokoyama S."/>
        </authorList>
    </citation>
    <scope>NUCLEOTIDE SEQUENCE [LARGE SCALE MRNA] (ISOFORM 3)</scope>
    <source>
        <tissue>Colon</tissue>
    </source>
</reference>
<reference key="4">
    <citation type="journal article" date="2006" name="Nature">
        <title>DNA sequence and analysis of human chromosome 8.</title>
        <authorList>
            <person name="Nusbaum C."/>
            <person name="Mikkelsen T.S."/>
            <person name="Zody M.C."/>
            <person name="Asakawa S."/>
            <person name="Taudien S."/>
            <person name="Garber M."/>
            <person name="Kodira C.D."/>
            <person name="Schueler M.G."/>
            <person name="Shimizu A."/>
            <person name="Whittaker C.A."/>
            <person name="Chang J.L."/>
            <person name="Cuomo C.A."/>
            <person name="Dewar K."/>
            <person name="FitzGerald M.G."/>
            <person name="Yang X."/>
            <person name="Allen N.R."/>
            <person name="Anderson S."/>
            <person name="Asakawa T."/>
            <person name="Blechschmidt K."/>
            <person name="Bloom T."/>
            <person name="Borowsky M.L."/>
            <person name="Butler J."/>
            <person name="Cook A."/>
            <person name="Corum B."/>
            <person name="DeArellano K."/>
            <person name="DeCaprio D."/>
            <person name="Dooley K.T."/>
            <person name="Dorris L. III"/>
            <person name="Engels R."/>
            <person name="Gloeckner G."/>
            <person name="Hafez N."/>
            <person name="Hagopian D.S."/>
            <person name="Hall J.L."/>
            <person name="Ishikawa S.K."/>
            <person name="Jaffe D.B."/>
            <person name="Kamat A."/>
            <person name="Kudoh J."/>
            <person name="Lehmann R."/>
            <person name="Lokitsang T."/>
            <person name="Macdonald P."/>
            <person name="Major J.E."/>
            <person name="Matthews C.D."/>
            <person name="Mauceli E."/>
            <person name="Menzel U."/>
            <person name="Mihalev A.H."/>
            <person name="Minoshima S."/>
            <person name="Murayama Y."/>
            <person name="Naylor J.W."/>
            <person name="Nicol R."/>
            <person name="Nguyen C."/>
            <person name="O'Leary S.B."/>
            <person name="O'Neill K."/>
            <person name="Parker S.C.J."/>
            <person name="Polley A."/>
            <person name="Raymond C.K."/>
            <person name="Reichwald K."/>
            <person name="Rodriguez J."/>
            <person name="Sasaki T."/>
            <person name="Schilhabel M."/>
            <person name="Siddiqui R."/>
            <person name="Smith C.L."/>
            <person name="Sneddon T.P."/>
            <person name="Talamas J.A."/>
            <person name="Tenzin P."/>
            <person name="Topham K."/>
            <person name="Venkataraman V."/>
            <person name="Wen G."/>
            <person name="Yamazaki S."/>
            <person name="Young S.K."/>
            <person name="Zeng Q."/>
            <person name="Zimmer A.R."/>
            <person name="Rosenthal A."/>
            <person name="Birren B.W."/>
            <person name="Platzer M."/>
            <person name="Shimizu N."/>
            <person name="Lander E.S."/>
        </authorList>
    </citation>
    <scope>NUCLEOTIDE SEQUENCE [LARGE SCALE GENOMIC DNA]</scope>
</reference>
<reference key="5">
    <citation type="journal article" date="2004" name="Genome Res.">
        <title>The status, quality, and expansion of the NIH full-length cDNA project: the Mammalian Gene Collection (MGC).</title>
        <authorList>
            <consortium name="The MGC Project Team"/>
        </authorList>
    </citation>
    <scope>NUCLEOTIDE SEQUENCE [LARGE SCALE MRNA] (ISOFORMS 1 AND 2)</scope>
    <source>
        <tissue>Eye</tissue>
        <tissue>Lung</tissue>
    </source>
</reference>
<reference key="6">
    <citation type="journal article" date="2007" name="BMC Genomics">
        <title>The full-ORF clone resource of the German cDNA consortium.</title>
        <authorList>
            <person name="Bechtel S."/>
            <person name="Rosenfelder H."/>
            <person name="Duda A."/>
            <person name="Schmidt C.P."/>
            <person name="Ernst U."/>
            <person name="Wellenreuther R."/>
            <person name="Mehrle A."/>
            <person name="Schuster C."/>
            <person name="Bahr A."/>
            <person name="Bloecker H."/>
            <person name="Heubner D."/>
            <person name="Hoerlein A."/>
            <person name="Michel G."/>
            <person name="Wedler H."/>
            <person name="Koehrer K."/>
            <person name="Ottenwaelder B."/>
            <person name="Poustka A."/>
            <person name="Wiemann S."/>
            <person name="Schupp I."/>
        </authorList>
    </citation>
    <scope>NUCLEOTIDE SEQUENCE [LARGE SCALE MRNA] OF 72-268 (ISOFORM 1)</scope>
    <source>
        <tissue>Stomach</tissue>
    </source>
</reference>
<reference key="7">
    <citation type="journal article" date="2011" name="BMC Syst. Biol.">
        <title>Initial characterization of the human central proteome.</title>
        <authorList>
            <person name="Burkard T.R."/>
            <person name="Planyavsky M."/>
            <person name="Kaupe I."/>
            <person name="Breitwieser F.P."/>
            <person name="Buerckstuemmer T."/>
            <person name="Bennett K.L."/>
            <person name="Superti-Furga G."/>
            <person name="Colinge J."/>
        </authorList>
    </citation>
    <scope>IDENTIFICATION BY MASS SPECTROMETRY [LARGE SCALE ANALYSIS]</scope>
</reference>
<reference key="8">
    <citation type="journal article" date="2018" name="Mol. Cell">
        <title>ZFAND1 recruits p97 and the 26S proteasome to promote the clearance of arsenite-induced stress granules.</title>
        <authorList>
            <person name="Turakhiya A."/>
            <person name="Meyer S.R."/>
            <person name="Marincola G."/>
            <person name="Boehm S."/>
            <person name="Vanselow J.T."/>
            <person name="Schlosser A."/>
            <person name="Hofmann K."/>
            <person name="Buchberger A."/>
        </authorList>
    </citation>
    <scope>FUNCTION</scope>
    <scope>INTERACTION WITH 26S PROTEASOME</scope>
    <scope>INTERACTION WITH PSMA1; PSMC4; PSMD1 AND VCP</scope>
    <scope>SUBCELLULAR LOCATION</scope>
    <scope>REGION UBIQUITIN-LIKE DOMAIN</scope>
</reference>
<reference key="9">
    <citation type="journal article" date="2023" name="Life. Sci Alliance">
        <title>N-terminal proteoforms may engage in different protein complexes.</title>
        <authorList>
            <person name="Bogaert A."/>
            <person name="Fijalkowska D."/>
            <person name="Staes A."/>
            <person name="Van de Steene T."/>
            <person name="Vuylsteke M."/>
            <person name="Stadler C."/>
            <person name="Eyckerman S."/>
            <person name="Spirohn K."/>
            <person name="Hao T."/>
            <person name="Calderwood M.A."/>
            <person name="Gevaert K."/>
        </authorList>
    </citation>
    <scope>CLEAVAGE OF INITIATOR METHIONINE (ISOFORMS 1 AND 2)</scope>
    <scope>ACETYLATION AT ALA-2 (ISOFORMS 1 AND 2)</scope>
</reference>
<dbReference type="EMBL" id="AK024069">
    <property type="protein sequence ID" value="BAB14813.1"/>
    <property type="molecule type" value="mRNA"/>
</dbReference>
<dbReference type="EMBL" id="CR457323">
    <property type="protein sequence ID" value="CAG33604.1"/>
    <property type="molecule type" value="mRNA"/>
</dbReference>
<dbReference type="EMBL" id="AK225195">
    <property type="status" value="NOT_ANNOTATED_CDS"/>
    <property type="molecule type" value="mRNA"/>
</dbReference>
<dbReference type="EMBL" id="AC132219">
    <property type="status" value="NOT_ANNOTATED_CDS"/>
    <property type="molecule type" value="Genomic_DNA"/>
</dbReference>
<dbReference type="EMBL" id="BC022251">
    <property type="protein sequence ID" value="AAH22251.1"/>
    <property type="molecule type" value="mRNA"/>
</dbReference>
<dbReference type="EMBL" id="BC056877">
    <property type="protein sequence ID" value="AAH56877.1"/>
    <property type="molecule type" value="mRNA"/>
</dbReference>
<dbReference type="EMBL" id="AL833030">
    <property type="protein sequence ID" value="CAH56344.1"/>
    <property type="molecule type" value="mRNA"/>
</dbReference>
<dbReference type="CCDS" id="CCDS55250.1">
    <molecule id="Q8TCF1-4"/>
</dbReference>
<dbReference type="CCDS" id="CCDS55251.1">
    <molecule id="Q8TCF1-3"/>
</dbReference>
<dbReference type="CCDS" id="CCDS6232.1">
    <molecule id="Q8TCF1-1"/>
</dbReference>
<dbReference type="RefSeq" id="NP_001164267.1">
    <molecule id="Q8TCF1-3"/>
    <property type="nucleotide sequence ID" value="NM_001170796.1"/>
</dbReference>
<dbReference type="RefSeq" id="NP_001164268.1">
    <molecule id="Q8TCF1-4"/>
    <property type="nucleotide sequence ID" value="NM_001170797.2"/>
</dbReference>
<dbReference type="RefSeq" id="NP_078975.2">
    <molecule id="Q8TCF1-1"/>
    <property type="nucleotide sequence ID" value="NM_024699.3"/>
</dbReference>
<dbReference type="PDB" id="7Y39">
    <property type="method" value="X-ray"/>
    <property type="resolution" value="1.88 A"/>
    <property type="chains" value="A/B=133-268"/>
</dbReference>
<dbReference type="PDB" id="7Y7L">
    <property type="method" value="NMR"/>
    <property type="chains" value="A=60-101"/>
</dbReference>
<dbReference type="PDB" id="7YAB">
    <property type="method" value="NMR"/>
    <property type="chains" value="A=7-47"/>
</dbReference>
<dbReference type="PDB" id="8HW9">
    <property type="method" value="NMR"/>
    <property type="chains" value="A=133-268"/>
</dbReference>
<dbReference type="PDB" id="8XE8">
    <property type="method" value="NMR"/>
    <property type="chains" value="A=133-268"/>
</dbReference>
<dbReference type="PDBsum" id="7Y39"/>
<dbReference type="PDBsum" id="7Y7L"/>
<dbReference type="PDBsum" id="7YAB"/>
<dbReference type="PDBsum" id="8HW9"/>
<dbReference type="PDBsum" id="8XE8"/>
<dbReference type="EMDB" id="EMD-38770"/>
<dbReference type="EMDB" id="EMD-38771"/>
<dbReference type="EMDB" id="EMD-38772"/>
<dbReference type="SMR" id="Q8TCF1"/>
<dbReference type="BioGRID" id="122863">
    <property type="interactions" value="19"/>
</dbReference>
<dbReference type="FunCoup" id="Q8TCF1">
    <property type="interactions" value="734"/>
</dbReference>
<dbReference type="IntAct" id="Q8TCF1">
    <property type="interactions" value="3"/>
</dbReference>
<dbReference type="MINT" id="Q8TCF1"/>
<dbReference type="STRING" id="9606.ENSP00000220669"/>
<dbReference type="iPTMnet" id="Q8TCF1"/>
<dbReference type="PhosphoSitePlus" id="Q8TCF1"/>
<dbReference type="BioMuta" id="ZFAND1"/>
<dbReference type="DMDM" id="73622102"/>
<dbReference type="jPOST" id="Q8TCF1"/>
<dbReference type="MassIVE" id="Q8TCF1"/>
<dbReference type="PaxDb" id="9606-ENSP00000220669"/>
<dbReference type="PeptideAtlas" id="Q8TCF1"/>
<dbReference type="ProteomicsDB" id="16275"/>
<dbReference type="ProteomicsDB" id="16535"/>
<dbReference type="ProteomicsDB" id="74130">
    <molecule id="Q8TCF1-1"/>
</dbReference>
<dbReference type="ProteomicsDB" id="74131">
    <molecule id="Q8TCF1-2"/>
</dbReference>
<dbReference type="Pumba" id="Q8TCF1"/>
<dbReference type="Antibodypedia" id="12557">
    <property type="antibodies" value="23 antibodies from 11 providers"/>
</dbReference>
<dbReference type="DNASU" id="79752"/>
<dbReference type="Ensembl" id="ENST00000220669.10">
    <molecule id="Q8TCF1-1"/>
    <property type="protein sequence ID" value="ENSP00000220669.5"/>
    <property type="gene ID" value="ENSG00000104231.11"/>
</dbReference>
<dbReference type="Ensembl" id="ENST00000519523.5">
    <molecule id="Q8TCF1-4"/>
    <property type="protein sequence ID" value="ENSP00000429167.1"/>
    <property type="gene ID" value="ENSG00000104231.11"/>
</dbReference>
<dbReference type="Ensembl" id="ENST00000521287.5">
    <molecule id="Q8TCF1-2"/>
    <property type="protein sequence ID" value="ENSP00000428139.1"/>
    <property type="gene ID" value="ENSG00000104231.11"/>
</dbReference>
<dbReference type="Ensembl" id="ENST00000522520.5">
    <molecule id="Q8TCF1-2"/>
    <property type="protein sequence ID" value="ENSP00000429999.1"/>
    <property type="gene ID" value="ENSG00000104231.11"/>
</dbReference>
<dbReference type="Ensembl" id="ENST00000523096.5">
    <molecule id="Q8TCF1-3"/>
    <property type="protein sequence ID" value="ENSP00000430736.1"/>
    <property type="gene ID" value="ENSG00000104231.11"/>
</dbReference>
<dbReference type="GeneID" id="79752"/>
<dbReference type="KEGG" id="hsa:79752"/>
<dbReference type="MANE-Select" id="ENST00000220669.10">
    <property type="protein sequence ID" value="ENSP00000220669.5"/>
    <property type="RefSeq nucleotide sequence ID" value="NM_024699.3"/>
    <property type="RefSeq protein sequence ID" value="NP_078975.2"/>
</dbReference>
<dbReference type="UCSC" id="uc003ycj.3">
    <molecule id="Q8TCF1-1"/>
    <property type="organism name" value="human"/>
</dbReference>
<dbReference type="AGR" id="HGNC:25858"/>
<dbReference type="CTD" id="79752"/>
<dbReference type="GeneCards" id="ZFAND1"/>
<dbReference type="HGNC" id="HGNC:25858">
    <property type="gene designation" value="ZFAND1"/>
</dbReference>
<dbReference type="HPA" id="ENSG00000104231">
    <property type="expression patterns" value="Low tissue specificity"/>
</dbReference>
<dbReference type="neXtProt" id="NX_Q8TCF1"/>
<dbReference type="OpenTargets" id="ENSG00000104231"/>
<dbReference type="PharmGKB" id="PA142670532"/>
<dbReference type="VEuPathDB" id="HostDB:ENSG00000104231"/>
<dbReference type="eggNOG" id="KOG3183">
    <property type="taxonomic scope" value="Eukaryota"/>
</dbReference>
<dbReference type="GeneTree" id="ENSGT00730000111180"/>
<dbReference type="HOGENOM" id="CLU_052358_0_0_1"/>
<dbReference type="InParanoid" id="Q8TCF1"/>
<dbReference type="OMA" id="RQYCLKH"/>
<dbReference type="OrthoDB" id="431929at2759"/>
<dbReference type="PAN-GO" id="Q8TCF1">
    <property type="GO annotations" value="3 GO annotations based on evolutionary models"/>
</dbReference>
<dbReference type="PhylomeDB" id="Q8TCF1"/>
<dbReference type="TreeFam" id="TF314219"/>
<dbReference type="PathwayCommons" id="Q8TCF1"/>
<dbReference type="SignaLink" id="Q8TCF1"/>
<dbReference type="BioGRID-ORCS" id="79752">
    <property type="hits" value="23 hits in 1159 CRISPR screens"/>
</dbReference>
<dbReference type="CD-CODE" id="DEE660B4">
    <property type="entry name" value="Stress granule"/>
</dbReference>
<dbReference type="ChiTaRS" id="ZFAND1">
    <property type="organism name" value="human"/>
</dbReference>
<dbReference type="GenomeRNAi" id="79752"/>
<dbReference type="Pharos" id="Q8TCF1">
    <property type="development level" value="Tbio"/>
</dbReference>
<dbReference type="PRO" id="PR:Q8TCF1"/>
<dbReference type="Proteomes" id="UP000005640">
    <property type="component" value="Chromosome 8"/>
</dbReference>
<dbReference type="RNAct" id="Q8TCF1">
    <property type="molecule type" value="protein"/>
</dbReference>
<dbReference type="Bgee" id="ENSG00000104231">
    <property type="expression patterns" value="Expressed in body of pancreas and 199 other cell types or tissues"/>
</dbReference>
<dbReference type="ExpressionAtlas" id="Q8TCF1">
    <property type="expression patterns" value="baseline and differential"/>
</dbReference>
<dbReference type="GO" id="GO:0005737">
    <property type="term" value="C:cytoplasm"/>
    <property type="evidence" value="ECO:0000318"/>
    <property type="project" value="GO_Central"/>
</dbReference>
<dbReference type="GO" id="GO:0010494">
    <property type="term" value="C:cytoplasmic stress granule"/>
    <property type="evidence" value="ECO:0000314"/>
    <property type="project" value="UniProtKB"/>
</dbReference>
<dbReference type="GO" id="GO:0070628">
    <property type="term" value="F:proteasome binding"/>
    <property type="evidence" value="ECO:0000314"/>
    <property type="project" value="UniProtKB"/>
</dbReference>
<dbReference type="GO" id="GO:0008270">
    <property type="term" value="F:zinc ion binding"/>
    <property type="evidence" value="ECO:0007669"/>
    <property type="project" value="UniProtKB-KW"/>
</dbReference>
<dbReference type="GO" id="GO:1903843">
    <property type="term" value="P:cellular response to arsenite ion"/>
    <property type="evidence" value="ECO:0000315"/>
    <property type="project" value="UniProtKB"/>
</dbReference>
<dbReference type="GO" id="GO:0090316">
    <property type="term" value="P:positive regulation of intracellular protein transport"/>
    <property type="evidence" value="ECO:0000315"/>
    <property type="project" value="UniProtKB"/>
</dbReference>
<dbReference type="GO" id="GO:0035617">
    <property type="term" value="P:stress granule disassembly"/>
    <property type="evidence" value="ECO:0000315"/>
    <property type="project" value="UniProtKB"/>
</dbReference>
<dbReference type="FunFam" id="4.10.1110.10:FF:000005">
    <property type="entry name" value="Zinc finger AN1-type containing 1"/>
    <property type="match status" value="1"/>
</dbReference>
<dbReference type="FunFam" id="4.10.1110.10:FF:000006">
    <property type="entry name" value="Zinc finger AN1-type containing 1"/>
    <property type="match status" value="1"/>
</dbReference>
<dbReference type="Gene3D" id="4.10.1110.10">
    <property type="entry name" value="AN1-like Zinc finger"/>
    <property type="match status" value="2"/>
</dbReference>
<dbReference type="InterPro" id="IPR035896">
    <property type="entry name" value="AN1-like_Znf"/>
</dbReference>
<dbReference type="InterPro" id="IPR000058">
    <property type="entry name" value="Znf_AN1"/>
</dbReference>
<dbReference type="PANTHER" id="PTHR14677:SF37">
    <property type="entry name" value="AN1-TYPE ZINC FINGER PROTEIN 1"/>
    <property type="match status" value="1"/>
</dbReference>
<dbReference type="PANTHER" id="PTHR14677">
    <property type="entry name" value="ARSENITE INDUCUBLE RNA ASSOCIATED PROTEIN AIP-1-RELATED"/>
    <property type="match status" value="1"/>
</dbReference>
<dbReference type="Pfam" id="PF25327">
    <property type="entry name" value="UBL_ZFAND1"/>
    <property type="match status" value="1"/>
</dbReference>
<dbReference type="Pfam" id="PF01428">
    <property type="entry name" value="zf-AN1"/>
    <property type="match status" value="2"/>
</dbReference>
<dbReference type="SMART" id="SM00154">
    <property type="entry name" value="ZnF_AN1"/>
    <property type="match status" value="2"/>
</dbReference>
<dbReference type="SUPFAM" id="SSF118310">
    <property type="entry name" value="AN1-like Zinc finger"/>
    <property type="match status" value="2"/>
</dbReference>
<dbReference type="PROSITE" id="PS51039">
    <property type="entry name" value="ZF_AN1"/>
    <property type="match status" value="2"/>
</dbReference>
<gene>
    <name evidence="8" type="primary">ZFAND1</name>
</gene>